<sequence>GSAFCGETCVLGTCYTPDCSCTALVCLKN</sequence>
<evidence type="ECO:0000250" key="1">
    <source>
        <dbReference type="UniProtKB" id="P86899"/>
    </source>
</evidence>
<evidence type="ECO:0000255" key="2">
    <source>
        <dbReference type="PROSITE-ProRule" id="PRU00395"/>
    </source>
</evidence>
<evidence type="ECO:0000269" key="3">
    <source>
    </source>
</evidence>
<evidence type="ECO:0000303" key="4">
    <source>
    </source>
</evidence>
<evidence type="ECO:0000305" key="5"/>
<reference evidence="5" key="1">
    <citation type="journal article" date="2011" name="Proc. Natl. Acad. Sci. U.S.A.">
        <title>Discovery of an unusual biosynthetic origin for circular proteins in legumes.</title>
        <authorList>
            <person name="Poth A.G."/>
            <person name="Colgrave M.L."/>
            <person name="Lyons R.E."/>
            <person name="Daly N.L."/>
            <person name="Craik D.J."/>
        </authorList>
    </citation>
    <scope>PROTEIN SEQUENCE</scope>
    <scope>CYCLIZATION</scope>
    <scope>MASS SPECTROMETRY</scope>
    <source>
        <tissue evidence="3">Leaf</tissue>
    </source>
</reference>
<protein>
    <recommendedName>
        <fullName evidence="4">Cyclotide cter-N</fullName>
    </recommendedName>
</protein>
<keyword id="KW-0903">Direct protein sequencing</keyword>
<keyword id="KW-1015">Disulfide bond</keyword>
<keyword id="KW-0960">Knottin</keyword>
<keyword id="KW-0558">Oxidation</keyword>
<keyword id="KW-0611">Plant defense</keyword>
<keyword id="KW-0964">Secreted</keyword>
<comment type="function">
    <text evidence="1 2">Probably participates in a plant defense mechanism.</text>
</comment>
<comment type="subcellular location">
    <subcellularLocation>
        <location evidence="1">Secreted</location>
    </subcellularLocation>
</comment>
<comment type="domain">
    <text evidence="5">The presence of a 'disulfide through disulfide knot' structurally defines this protein as a knottin.</text>
</comment>
<comment type="PTM">
    <text evidence="2 3">This is a cyclic peptide.</text>
</comment>
<comment type="mass spectrometry"/>
<comment type="similarity">
    <text evidence="2">Belongs to the cyclotide family. Moebius subfamily.</text>
</comment>
<comment type="caution">
    <text evidence="5">This peptide is cyclic. The start position was chosen by similarity to cyclotide cter-M for which the DNA sequence is known.</text>
</comment>
<proteinExistence type="evidence at protein level"/>
<accession>P86900</accession>
<name>CYCN_CLITE</name>
<organism>
    <name type="scientific">Clitoria ternatea</name>
    <name type="common">Butterfly pea</name>
    <dbReference type="NCBI Taxonomy" id="43366"/>
    <lineage>
        <taxon>Eukaryota</taxon>
        <taxon>Viridiplantae</taxon>
        <taxon>Streptophyta</taxon>
        <taxon>Embryophyta</taxon>
        <taxon>Tracheophyta</taxon>
        <taxon>Spermatophyta</taxon>
        <taxon>Magnoliopsida</taxon>
        <taxon>eudicotyledons</taxon>
        <taxon>Gunneridae</taxon>
        <taxon>Pentapetalae</taxon>
        <taxon>rosids</taxon>
        <taxon>fabids</taxon>
        <taxon>Fabales</taxon>
        <taxon>Fabaceae</taxon>
        <taxon>Papilionoideae</taxon>
        <taxon>50 kb inversion clade</taxon>
        <taxon>NPAAA clade</taxon>
        <taxon>indigoferoid/millettioid clade</taxon>
        <taxon>Phaseoleae</taxon>
        <taxon>Clitoria</taxon>
    </lineage>
</organism>
<dbReference type="SMR" id="P86900"/>
<dbReference type="GO" id="GO:0005576">
    <property type="term" value="C:extracellular region"/>
    <property type="evidence" value="ECO:0007669"/>
    <property type="project" value="UniProtKB-SubCell"/>
</dbReference>
<dbReference type="GO" id="GO:0006952">
    <property type="term" value="P:defense response"/>
    <property type="evidence" value="ECO:0007669"/>
    <property type="project" value="UniProtKB-KW"/>
</dbReference>
<dbReference type="InterPro" id="IPR005535">
    <property type="entry name" value="Cyclotide"/>
</dbReference>
<dbReference type="InterPro" id="IPR012324">
    <property type="entry name" value="Cyclotide_moebius_CS"/>
</dbReference>
<dbReference type="InterPro" id="IPR036146">
    <property type="entry name" value="Cyclotide_sf"/>
</dbReference>
<dbReference type="Pfam" id="PF03784">
    <property type="entry name" value="Cyclotide"/>
    <property type="match status" value="1"/>
</dbReference>
<dbReference type="SUPFAM" id="SSF57038">
    <property type="entry name" value="Cyclotides"/>
    <property type="match status" value="1"/>
</dbReference>
<dbReference type="PROSITE" id="PS51052">
    <property type="entry name" value="CYCLOTIDE"/>
    <property type="match status" value="1"/>
</dbReference>
<dbReference type="PROSITE" id="PS60009">
    <property type="entry name" value="CYCLOTIDE_MOEBIUS"/>
    <property type="match status" value="1"/>
</dbReference>
<feature type="peptide" id="PRO_0000412639" description="Cyclotide cter-N" evidence="2 3">
    <location>
        <begin position="1"/>
        <end position="29"/>
    </location>
</feature>
<feature type="disulfide bond" evidence="1 2">
    <location>
        <begin position="5"/>
        <end position="19"/>
    </location>
</feature>
<feature type="disulfide bond" evidence="1 2">
    <location>
        <begin position="9"/>
        <end position="21"/>
    </location>
</feature>
<feature type="disulfide bond" evidence="1 2">
    <location>
        <begin position="14"/>
        <end position="26"/>
    </location>
</feature>
<feature type="cross-link" description="Cyclopeptide (Gly-Asn)" evidence="3">
    <location>
        <begin position="1"/>
        <end position="29"/>
    </location>
</feature>